<sequence length="346" mass="37903">MSLAQTIMPEGYIFPPKPVPLTQNEQGEYKARIKQLLQEKNAVLVAHYYTDPEIQALAEETGGCVADSLEMARFGTRHDADMIIVAGVRFMGETAKILTPNKTVVMPTLEATCSLDIGCPVDEFSAFCDQHPDRTVVVYANTSTAVKARADWIVTSSCALEIVEHLDELGEKIIWGPDKHLGSYIQKNTGADMIMWNGACIVHDEFKTKALKDMKALHPDAGVLVHPESPEEIVALADAVGSTSQLIKAAQTMSNKKFIVATDRGIFYKMQQLCPDKEFFAAPTAGEGASCKTCAHCPWMAMNGLKAIEEALIDPKGKEVFVDMDLREGALKSLNRMLDFTATMAK</sequence>
<accession>Q3IJ06</accession>
<organism>
    <name type="scientific">Pseudoalteromonas translucida (strain TAC 125)</name>
    <dbReference type="NCBI Taxonomy" id="326442"/>
    <lineage>
        <taxon>Bacteria</taxon>
        <taxon>Pseudomonadati</taxon>
        <taxon>Pseudomonadota</taxon>
        <taxon>Gammaproteobacteria</taxon>
        <taxon>Alteromonadales</taxon>
        <taxon>Pseudoalteromonadaceae</taxon>
        <taxon>Pseudoalteromonas</taxon>
    </lineage>
</organism>
<evidence type="ECO:0000255" key="1">
    <source>
        <dbReference type="HAMAP-Rule" id="MF_00567"/>
    </source>
</evidence>
<feature type="chain" id="PRO_1000024963" description="Quinolinate synthase">
    <location>
        <begin position="1"/>
        <end position="346"/>
    </location>
</feature>
<feature type="binding site" evidence="1">
    <location>
        <position position="47"/>
    </location>
    <ligand>
        <name>iminosuccinate</name>
        <dbReference type="ChEBI" id="CHEBI:77875"/>
    </ligand>
</feature>
<feature type="binding site" evidence="1">
    <location>
        <position position="68"/>
    </location>
    <ligand>
        <name>iminosuccinate</name>
        <dbReference type="ChEBI" id="CHEBI:77875"/>
    </ligand>
</feature>
<feature type="binding site" evidence="1">
    <location>
        <position position="113"/>
    </location>
    <ligand>
        <name>[4Fe-4S] cluster</name>
        <dbReference type="ChEBI" id="CHEBI:49883"/>
    </ligand>
</feature>
<feature type="binding site" evidence="1">
    <location>
        <begin position="139"/>
        <end position="141"/>
    </location>
    <ligand>
        <name>iminosuccinate</name>
        <dbReference type="ChEBI" id="CHEBI:77875"/>
    </ligand>
</feature>
<feature type="binding site" evidence="1">
    <location>
        <position position="156"/>
    </location>
    <ligand>
        <name>iminosuccinate</name>
        <dbReference type="ChEBI" id="CHEBI:77875"/>
    </ligand>
</feature>
<feature type="binding site" evidence="1">
    <location>
        <position position="200"/>
    </location>
    <ligand>
        <name>[4Fe-4S] cluster</name>
        <dbReference type="ChEBI" id="CHEBI:49883"/>
    </ligand>
</feature>
<feature type="binding site" evidence="1">
    <location>
        <begin position="226"/>
        <end position="228"/>
    </location>
    <ligand>
        <name>iminosuccinate</name>
        <dbReference type="ChEBI" id="CHEBI:77875"/>
    </ligand>
</feature>
<feature type="binding site" evidence="1">
    <location>
        <position position="243"/>
    </location>
    <ligand>
        <name>iminosuccinate</name>
        <dbReference type="ChEBI" id="CHEBI:77875"/>
    </ligand>
</feature>
<feature type="binding site" evidence="1">
    <location>
        <position position="297"/>
    </location>
    <ligand>
        <name>[4Fe-4S] cluster</name>
        <dbReference type="ChEBI" id="CHEBI:49883"/>
    </ligand>
</feature>
<proteinExistence type="inferred from homology"/>
<reference key="1">
    <citation type="journal article" date="2005" name="Genome Res.">
        <title>Coping with cold: the genome of the versatile marine Antarctica bacterium Pseudoalteromonas haloplanktis TAC125.</title>
        <authorList>
            <person name="Medigue C."/>
            <person name="Krin E."/>
            <person name="Pascal G."/>
            <person name="Barbe V."/>
            <person name="Bernsel A."/>
            <person name="Bertin P.N."/>
            <person name="Cheung F."/>
            <person name="Cruveiller S."/>
            <person name="D'Amico S."/>
            <person name="Duilio A."/>
            <person name="Fang G."/>
            <person name="Feller G."/>
            <person name="Ho C."/>
            <person name="Mangenot S."/>
            <person name="Marino G."/>
            <person name="Nilsson J."/>
            <person name="Parrilli E."/>
            <person name="Rocha E.P.C."/>
            <person name="Rouy Z."/>
            <person name="Sekowska A."/>
            <person name="Tutino M.L."/>
            <person name="Vallenet D."/>
            <person name="von Heijne G."/>
            <person name="Danchin A."/>
        </authorList>
    </citation>
    <scope>NUCLEOTIDE SEQUENCE [LARGE SCALE GENOMIC DNA]</scope>
    <source>
        <strain>TAC 125</strain>
    </source>
</reference>
<comment type="function">
    <text evidence="1">Catalyzes the condensation of iminoaspartate with dihydroxyacetone phosphate to form quinolinate.</text>
</comment>
<comment type="catalytic activity">
    <reaction evidence="1">
        <text>iminosuccinate + dihydroxyacetone phosphate = quinolinate + phosphate + 2 H2O + H(+)</text>
        <dbReference type="Rhea" id="RHEA:25888"/>
        <dbReference type="ChEBI" id="CHEBI:15377"/>
        <dbReference type="ChEBI" id="CHEBI:15378"/>
        <dbReference type="ChEBI" id="CHEBI:29959"/>
        <dbReference type="ChEBI" id="CHEBI:43474"/>
        <dbReference type="ChEBI" id="CHEBI:57642"/>
        <dbReference type="ChEBI" id="CHEBI:77875"/>
        <dbReference type="EC" id="2.5.1.72"/>
    </reaction>
    <physiologicalReaction direction="left-to-right" evidence="1">
        <dbReference type="Rhea" id="RHEA:25889"/>
    </physiologicalReaction>
</comment>
<comment type="cofactor">
    <cofactor evidence="1">
        <name>[4Fe-4S] cluster</name>
        <dbReference type="ChEBI" id="CHEBI:49883"/>
    </cofactor>
    <text evidence="1">Binds 1 [4Fe-4S] cluster per subunit.</text>
</comment>
<comment type="pathway">
    <text evidence="1">Cofactor biosynthesis; NAD(+) biosynthesis; quinolinate from iminoaspartate: step 1/1.</text>
</comment>
<comment type="subcellular location">
    <subcellularLocation>
        <location evidence="1">Cytoplasm</location>
    </subcellularLocation>
</comment>
<comment type="similarity">
    <text evidence="1">Belongs to the quinolinate synthase family. Type 1 subfamily.</text>
</comment>
<protein>
    <recommendedName>
        <fullName evidence="1">Quinolinate synthase</fullName>
        <ecNumber evidence="1">2.5.1.72</ecNumber>
    </recommendedName>
</protein>
<gene>
    <name evidence="1" type="primary">nadA</name>
    <name type="ordered locus">PSHAa1866</name>
</gene>
<keyword id="KW-0004">4Fe-4S</keyword>
<keyword id="KW-0963">Cytoplasm</keyword>
<keyword id="KW-0408">Iron</keyword>
<keyword id="KW-0411">Iron-sulfur</keyword>
<keyword id="KW-0479">Metal-binding</keyword>
<keyword id="KW-0662">Pyridine nucleotide biosynthesis</keyword>
<keyword id="KW-1185">Reference proteome</keyword>
<keyword id="KW-0808">Transferase</keyword>
<name>NADA_PSET1</name>
<dbReference type="EC" id="2.5.1.72" evidence="1"/>
<dbReference type="EMBL" id="CR954246">
    <property type="protein sequence ID" value="CAI86938.1"/>
    <property type="molecule type" value="Genomic_DNA"/>
</dbReference>
<dbReference type="SMR" id="Q3IJ06"/>
<dbReference type="STRING" id="326442.PSHAa1866"/>
<dbReference type="KEGG" id="pha:PSHAa1866"/>
<dbReference type="PATRIC" id="fig|326442.8.peg.1813"/>
<dbReference type="eggNOG" id="COG0379">
    <property type="taxonomic scope" value="Bacteria"/>
</dbReference>
<dbReference type="HOGENOM" id="CLU_047382_1_0_6"/>
<dbReference type="BioCyc" id="PHAL326442:PSHA_RS09155-MONOMER"/>
<dbReference type="UniPathway" id="UPA00253">
    <property type="reaction ID" value="UER00327"/>
</dbReference>
<dbReference type="Proteomes" id="UP000006843">
    <property type="component" value="Chromosome I"/>
</dbReference>
<dbReference type="GO" id="GO:0005829">
    <property type="term" value="C:cytosol"/>
    <property type="evidence" value="ECO:0007669"/>
    <property type="project" value="TreeGrafter"/>
</dbReference>
<dbReference type="GO" id="GO:0051539">
    <property type="term" value="F:4 iron, 4 sulfur cluster binding"/>
    <property type="evidence" value="ECO:0007669"/>
    <property type="project" value="UniProtKB-KW"/>
</dbReference>
<dbReference type="GO" id="GO:0046872">
    <property type="term" value="F:metal ion binding"/>
    <property type="evidence" value="ECO:0007669"/>
    <property type="project" value="UniProtKB-KW"/>
</dbReference>
<dbReference type="GO" id="GO:0008987">
    <property type="term" value="F:quinolinate synthetase A activity"/>
    <property type="evidence" value="ECO:0007669"/>
    <property type="project" value="UniProtKB-UniRule"/>
</dbReference>
<dbReference type="GO" id="GO:0034628">
    <property type="term" value="P:'de novo' NAD biosynthetic process from L-aspartate"/>
    <property type="evidence" value="ECO:0007669"/>
    <property type="project" value="TreeGrafter"/>
</dbReference>
<dbReference type="FunFam" id="3.40.50.10800:FF:000003">
    <property type="entry name" value="Quinolinate synthase A"/>
    <property type="match status" value="1"/>
</dbReference>
<dbReference type="Gene3D" id="3.40.50.10800">
    <property type="entry name" value="NadA-like"/>
    <property type="match status" value="3"/>
</dbReference>
<dbReference type="HAMAP" id="MF_00567">
    <property type="entry name" value="NadA_type1"/>
    <property type="match status" value="1"/>
</dbReference>
<dbReference type="InterPro" id="IPR003473">
    <property type="entry name" value="NadA"/>
</dbReference>
<dbReference type="InterPro" id="IPR036094">
    <property type="entry name" value="NadA_sf"/>
</dbReference>
<dbReference type="InterPro" id="IPR023513">
    <property type="entry name" value="Quinolinate_synth_A_type1"/>
</dbReference>
<dbReference type="NCBIfam" id="TIGR00550">
    <property type="entry name" value="nadA"/>
    <property type="match status" value="1"/>
</dbReference>
<dbReference type="NCBIfam" id="NF006877">
    <property type="entry name" value="PRK09375.1-1"/>
    <property type="match status" value="1"/>
</dbReference>
<dbReference type="NCBIfam" id="NF006878">
    <property type="entry name" value="PRK09375.1-2"/>
    <property type="match status" value="1"/>
</dbReference>
<dbReference type="PANTHER" id="PTHR30573:SF0">
    <property type="entry name" value="QUINOLINATE SYNTHASE, CHLOROPLASTIC"/>
    <property type="match status" value="1"/>
</dbReference>
<dbReference type="PANTHER" id="PTHR30573">
    <property type="entry name" value="QUINOLINATE SYNTHETASE A"/>
    <property type="match status" value="1"/>
</dbReference>
<dbReference type="Pfam" id="PF02445">
    <property type="entry name" value="NadA"/>
    <property type="match status" value="1"/>
</dbReference>
<dbReference type="SUPFAM" id="SSF142754">
    <property type="entry name" value="NadA-like"/>
    <property type="match status" value="1"/>
</dbReference>